<reference key="1">
    <citation type="journal article" date="2005" name="J. Bacteriol.">
        <title>Insights on evolution of virulence and resistance from the complete genome analysis of an early methicillin-resistant Staphylococcus aureus strain and a biofilm-producing methicillin-resistant Staphylococcus epidermidis strain.</title>
        <authorList>
            <person name="Gill S.R."/>
            <person name="Fouts D.E."/>
            <person name="Archer G.L."/>
            <person name="Mongodin E.F."/>
            <person name="DeBoy R.T."/>
            <person name="Ravel J."/>
            <person name="Paulsen I.T."/>
            <person name="Kolonay J.F."/>
            <person name="Brinkac L.M."/>
            <person name="Beanan M.J."/>
            <person name="Dodson R.J."/>
            <person name="Daugherty S.C."/>
            <person name="Madupu R."/>
            <person name="Angiuoli S.V."/>
            <person name="Durkin A.S."/>
            <person name="Haft D.H."/>
            <person name="Vamathevan J.J."/>
            <person name="Khouri H."/>
            <person name="Utterback T.R."/>
            <person name="Lee C."/>
            <person name="Dimitrov G."/>
            <person name="Jiang L."/>
            <person name="Qin H."/>
            <person name="Weidman J."/>
            <person name="Tran K."/>
            <person name="Kang K.H."/>
            <person name="Hance I.R."/>
            <person name="Nelson K.E."/>
            <person name="Fraser C.M."/>
        </authorList>
    </citation>
    <scope>NUCLEOTIDE SEQUENCE [LARGE SCALE GENOMIC DNA]</scope>
    <source>
        <strain>COL</strain>
    </source>
</reference>
<feature type="chain" id="PRO_0000208441" description="N-acetylglucosaminyldiphosphoundecaprenol N-acetyl-beta-D-mannosaminyltransferase">
    <location>
        <begin position="1"/>
        <end position="254"/>
    </location>
</feature>
<accession>Q5HI32</accession>
<proteinExistence type="inferred from homology"/>
<sequence length="254" mass="29133">MTVEERSNTAKVDILGVDFDNTTMLQMVENIKTFFANQSTNNLFIVTANPEIVNYATTHQAYLELINQASYIVADGTGVVKASHRLKQPLAHRIPGIELMDECLKIAHVNHQKVFLLGATNEVVEAAQYALQQRYPNISFAHHHGYIDLEDETVVKRIKLFKPDYIFVGMGFPKQEEWIMTHENQFESTVMMGVGGSLEVFAGAKKRAPYIFRKLNIEWIYRALIDWKRIGRLKSIPIFMYKIAKAKRKIKKAK</sequence>
<organism>
    <name type="scientific">Staphylococcus aureus (strain COL)</name>
    <dbReference type="NCBI Taxonomy" id="93062"/>
    <lineage>
        <taxon>Bacteria</taxon>
        <taxon>Bacillati</taxon>
        <taxon>Bacillota</taxon>
        <taxon>Bacilli</taxon>
        <taxon>Bacillales</taxon>
        <taxon>Staphylococcaceae</taxon>
        <taxon>Staphylococcus</taxon>
    </lineage>
</organism>
<dbReference type="EC" id="2.4.1.187" evidence="1"/>
<dbReference type="EMBL" id="CP000046">
    <property type="protein sequence ID" value="AAW37757.1"/>
    <property type="molecule type" value="Genomic_DNA"/>
</dbReference>
<dbReference type="RefSeq" id="WP_000215388.1">
    <property type="nucleotide sequence ID" value="NZ_JBGOFO010000005.1"/>
</dbReference>
<dbReference type="SMR" id="Q5HI32"/>
<dbReference type="CAZy" id="GT26">
    <property type="family name" value="Glycosyltransferase Family 26"/>
</dbReference>
<dbReference type="KEGG" id="sac:SACOL0693"/>
<dbReference type="HOGENOM" id="CLU_063203_3_1_9"/>
<dbReference type="UniPathway" id="UPA00790"/>
<dbReference type="Proteomes" id="UP000000530">
    <property type="component" value="Chromosome"/>
</dbReference>
<dbReference type="GO" id="GO:0047244">
    <property type="term" value="F:N-acetylglucosaminyldiphosphoundecaprenol N-acetyl-beta-D-mannosaminyltransferase activity"/>
    <property type="evidence" value="ECO:0007669"/>
    <property type="project" value="UniProtKB-UniRule"/>
</dbReference>
<dbReference type="GO" id="GO:0071555">
    <property type="term" value="P:cell wall organization"/>
    <property type="evidence" value="ECO:0007669"/>
    <property type="project" value="UniProtKB-KW"/>
</dbReference>
<dbReference type="GO" id="GO:0019350">
    <property type="term" value="P:teichoic acid biosynthetic process"/>
    <property type="evidence" value="ECO:0007669"/>
    <property type="project" value="UniProtKB-UniRule"/>
</dbReference>
<dbReference type="CDD" id="cd06533">
    <property type="entry name" value="Glyco_transf_WecG_TagA"/>
    <property type="match status" value="1"/>
</dbReference>
<dbReference type="HAMAP" id="MF_02070">
    <property type="entry name" value="TagA_TarA"/>
    <property type="match status" value="1"/>
</dbReference>
<dbReference type="InterPro" id="IPR053391">
    <property type="entry name" value="TAB_Glycosyltransferase"/>
</dbReference>
<dbReference type="InterPro" id="IPR034714">
    <property type="entry name" value="TagA_TarA"/>
</dbReference>
<dbReference type="InterPro" id="IPR004629">
    <property type="entry name" value="WecG_TagA_CpsF"/>
</dbReference>
<dbReference type="NCBIfam" id="NF041710">
    <property type="entry name" value="UDPacetylman_taseTarA"/>
    <property type="match status" value="1"/>
</dbReference>
<dbReference type="NCBIfam" id="TIGR00696">
    <property type="entry name" value="wecG_tagA_cpsF"/>
    <property type="match status" value="1"/>
</dbReference>
<dbReference type="PANTHER" id="PTHR34136">
    <property type="match status" value="1"/>
</dbReference>
<dbReference type="PANTHER" id="PTHR34136:SF1">
    <property type="entry name" value="UDP-N-ACETYL-D-MANNOSAMINURONIC ACID TRANSFERASE"/>
    <property type="match status" value="1"/>
</dbReference>
<dbReference type="Pfam" id="PF03808">
    <property type="entry name" value="Glyco_tran_WecG"/>
    <property type="match status" value="1"/>
</dbReference>
<comment type="function">
    <text evidence="1">Catalyzes the conversion of GlcNAc-PP-undecaprenol into ManNAc-GlcNAc-PP-undecaprenol, the first committed lipid intermediate in the de novo synthesis of teichoic acid.</text>
</comment>
<comment type="catalytic activity">
    <reaction evidence="1">
        <text>UDP-N-acetyl-alpha-D-mannosamine + N-acetyl-alpha-D-glucosaminyl-di-trans,octa-cis-undecaprenyl diphosphate = N-acetyl-beta-D-mannosaminyl-(1-&gt;4)-N-acetyl-alpha-D-glucosaminyl di-trans,octa-cis-undecaprenyl diphosphate + UDP + H(+)</text>
        <dbReference type="Rhea" id="RHEA:16053"/>
        <dbReference type="ChEBI" id="CHEBI:15378"/>
        <dbReference type="ChEBI" id="CHEBI:58223"/>
        <dbReference type="ChEBI" id="CHEBI:62959"/>
        <dbReference type="ChEBI" id="CHEBI:68623"/>
        <dbReference type="ChEBI" id="CHEBI:132210"/>
        <dbReference type="EC" id="2.4.1.187"/>
    </reaction>
</comment>
<comment type="pathway">
    <text evidence="2">Cell wall biogenesis; poly(ribitol phosphate) teichoic acid biosynthesis.</text>
</comment>
<comment type="similarity">
    <text evidence="1">Belongs to the glycosyltransferase 26 family. TagA/TarA subfamily.</text>
</comment>
<gene>
    <name type="primary">tarA</name>
    <name type="ordered locus">SACOL0693</name>
</gene>
<name>TARA_STAAC</name>
<evidence type="ECO:0000255" key="1">
    <source>
        <dbReference type="HAMAP-Rule" id="MF_02070"/>
    </source>
</evidence>
<evidence type="ECO:0000305" key="2"/>
<keyword id="KW-0961">Cell wall biogenesis/degradation</keyword>
<keyword id="KW-0328">Glycosyltransferase</keyword>
<keyword id="KW-0777">Teichoic acid biosynthesis</keyword>
<keyword id="KW-0808">Transferase</keyword>
<protein>
    <recommendedName>
        <fullName evidence="1">N-acetylglucosaminyldiphosphoundecaprenol N-acetyl-beta-D-mannosaminyltransferase</fullName>
        <ecNumber evidence="1">2.4.1.187</ecNumber>
    </recommendedName>
    <alternativeName>
        <fullName evidence="1">N-acetylmannosaminyltransferase</fullName>
    </alternativeName>
    <alternativeName>
        <fullName evidence="1">UDP-N-acetylmannosamine transferase</fullName>
    </alternativeName>
    <alternativeName>
        <fullName evidence="1">UDP-N-acetylmannosamine:N-acetylglucosaminyl pyrophosphorylundecaprenol N-acetylmannosaminyltransferase</fullName>
    </alternativeName>
</protein>